<accession>Q3IZJ0</accession>
<protein>
    <recommendedName>
        <fullName evidence="1">3-isopropylmalate dehydratase small subunit</fullName>
        <ecNumber evidence="1">4.2.1.33</ecNumber>
    </recommendedName>
    <alternativeName>
        <fullName evidence="1">Alpha-IPM isomerase</fullName>
        <shortName evidence="1">IPMI</shortName>
    </alternativeName>
    <alternativeName>
        <fullName evidence="1">Isopropylmalate isomerase</fullName>
    </alternativeName>
</protein>
<name>LEUD_CERS4</name>
<gene>
    <name evidence="1" type="primary">leuD</name>
    <name type="ordered locus">RHOS4_24760</name>
    <name type="ORF">RSP_0862</name>
</gene>
<keyword id="KW-0028">Amino-acid biosynthesis</keyword>
<keyword id="KW-0100">Branched-chain amino acid biosynthesis</keyword>
<keyword id="KW-0432">Leucine biosynthesis</keyword>
<keyword id="KW-0456">Lyase</keyword>
<keyword id="KW-1185">Reference proteome</keyword>
<evidence type="ECO:0000255" key="1">
    <source>
        <dbReference type="HAMAP-Rule" id="MF_01031"/>
    </source>
</evidence>
<reference key="1">
    <citation type="submission" date="2005-09" db="EMBL/GenBank/DDBJ databases">
        <title>Complete sequence of chromosome 1 of Rhodobacter sphaeroides 2.4.1.</title>
        <authorList>
            <person name="Copeland A."/>
            <person name="Lucas S."/>
            <person name="Lapidus A."/>
            <person name="Barry K."/>
            <person name="Detter J.C."/>
            <person name="Glavina T."/>
            <person name="Hammon N."/>
            <person name="Israni S."/>
            <person name="Pitluck S."/>
            <person name="Richardson P."/>
            <person name="Mackenzie C."/>
            <person name="Choudhary M."/>
            <person name="Larimer F."/>
            <person name="Hauser L.J."/>
            <person name="Land M."/>
            <person name="Donohue T.J."/>
            <person name="Kaplan S."/>
        </authorList>
    </citation>
    <scope>NUCLEOTIDE SEQUENCE [LARGE SCALE GENOMIC DNA]</scope>
    <source>
        <strain>ATCC 17023 / DSM 158 / JCM 6121 / CCUG 31486 / LMG 2827 / NBRC 12203 / NCIMB 8253 / ATH 2.4.1.</strain>
    </source>
</reference>
<feature type="chain" id="PRO_1000063821" description="3-isopropylmalate dehydratase small subunit">
    <location>
        <begin position="1"/>
        <end position="201"/>
    </location>
</feature>
<proteinExistence type="inferred from homology"/>
<comment type="function">
    <text evidence="1">Catalyzes the isomerization between 2-isopropylmalate and 3-isopropylmalate, via the formation of 2-isopropylmaleate.</text>
</comment>
<comment type="catalytic activity">
    <reaction evidence="1">
        <text>(2R,3S)-3-isopropylmalate = (2S)-2-isopropylmalate</text>
        <dbReference type="Rhea" id="RHEA:32287"/>
        <dbReference type="ChEBI" id="CHEBI:1178"/>
        <dbReference type="ChEBI" id="CHEBI:35121"/>
        <dbReference type="EC" id="4.2.1.33"/>
    </reaction>
</comment>
<comment type="pathway">
    <text evidence="1">Amino-acid biosynthesis; L-leucine biosynthesis; L-leucine from 3-methyl-2-oxobutanoate: step 2/4.</text>
</comment>
<comment type="subunit">
    <text evidence="1">Heterodimer of LeuC and LeuD.</text>
</comment>
<comment type="similarity">
    <text evidence="1">Belongs to the LeuD family. LeuD type 1 subfamily.</text>
</comment>
<sequence length="201" mass="22397">MQEFTKVTGVAAPMPLVNIDTDMIIPKQFLKTIQRSGLGKNLFDEMRYNPDGSEIPEFVLNQPAYRDAQIIVAGDNFGCGSSREHAPWALLDFGIRCVISTSFADIFYNNCFKNGILPIVMPPEVVEVLMEDARRGANARMTVDLEAQTVTTSDGQSFPFQVDSFRRHCLMNGLDDIGLTLEKAASIDGFERDLATLRPWV</sequence>
<organism>
    <name type="scientific">Cereibacter sphaeroides (strain ATCC 17023 / DSM 158 / JCM 6121 / CCUG 31486 / LMG 2827 / NBRC 12203 / NCIMB 8253 / ATH 2.4.1.)</name>
    <name type="common">Rhodobacter sphaeroides</name>
    <dbReference type="NCBI Taxonomy" id="272943"/>
    <lineage>
        <taxon>Bacteria</taxon>
        <taxon>Pseudomonadati</taxon>
        <taxon>Pseudomonadota</taxon>
        <taxon>Alphaproteobacteria</taxon>
        <taxon>Rhodobacterales</taxon>
        <taxon>Paracoccaceae</taxon>
        <taxon>Cereibacter</taxon>
    </lineage>
</organism>
<dbReference type="EC" id="4.2.1.33" evidence="1"/>
<dbReference type="EMBL" id="CP000143">
    <property type="protein sequence ID" value="ABA80044.1"/>
    <property type="molecule type" value="Genomic_DNA"/>
</dbReference>
<dbReference type="RefSeq" id="WP_002721055.1">
    <property type="nucleotide sequence ID" value="NZ_CP030271.1"/>
</dbReference>
<dbReference type="RefSeq" id="YP_353945.1">
    <property type="nucleotide sequence ID" value="NC_007493.2"/>
</dbReference>
<dbReference type="SMR" id="Q3IZJ0"/>
<dbReference type="STRING" id="272943.RSP_0862"/>
<dbReference type="EnsemblBacteria" id="ABA80044">
    <property type="protein sequence ID" value="ABA80044"/>
    <property type="gene ID" value="RSP_0862"/>
</dbReference>
<dbReference type="GeneID" id="3718215"/>
<dbReference type="KEGG" id="rsp:RSP_0862"/>
<dbReference type="PATRIC" id="fig|272943.9.peg.2826"/>
<dbReference type="eggNOG" id="COG0066">
    <property type="taxonomic scope" value="Bacteria"/>
</dbReference>
<dbReference type="OrthoDB" id="9777465at2"/>
<dbReference type="PhylomeDB" id="Q3IZJ0"/>
<dbReference type="UniPathway" id="UPA00048">
    <property type="reaction ID" value="UER00071"/>
</dbReference>
<dbReference type="Proteomes" id="UP000002703">
    <property type="component" value="Chromosome 1"/>
</dbReference>
<dbReference type="GO" id="GO:0009316">
    <property type="term" value="C:3-isopropylmalate dehydratase complex"/>
    <property type="evidence" value="ECO:0007669"/>
    <property type="project" value="InterPro"/>
</dbReference>
<dbReference type="GO" id="GO:0003861">
    <property type="term" value="F:3-isopropylmalate dehydratase activity"/>
    <property type="evidence" value="ECO:0007669"/>
    <property type="project" value="UniProtKB-UniRule"/>
</dbReference>
<dbReference type="GO" id="GO:0009098">
    <property type="term" value="P:L-leucine biosynthetic process"/>
    <property type="evidence" value="ECO:0007669"/>
    <property type="project" value="UniProtKB-UniRule"/>
</dbReference>
<dbReference type="CDD" id="cd01577">
    <property type="entry name" value="IPMI_Swivel"/>
    <property type="match status" value="1"/>
</dbReference>
<dbReference type="FunFam" id="3.20.19.10:FF:000003">
    <property type="entry name" value="3-isopropylmalate dehydratase small subunit"/>
    <property type="match status" value="1"/>
</dbReference>
<dbReference type="Gene3D" id="3.20.19.10">
    <property type="entry name" value="Aconitase, domain 4"/>
    <property type="match status" value="1"/>
</dbReference>
<dbReference type="HAMAP" id="MF_01031">
    <property type="entry name" value="LeuD_type1"/>
    <property type="match status" value="1"/>
</dbReference>
<dbReference type="InterPro" id="IPR004431">
    <property type="entry name" value="3-IsopropMal_deHydase_ssu"/>
</dbReference>
<dbReference type="InterPro" id="IPR015928">
    <property type="entry name" value="Aconitase/3IPM_dehydase_swvl"/>
</dbReference>
<dbReference type="InterPro" id="IPR000573">
    <property type="entry name" value="AconitaseA/IPMdHydase_ssu_swvl"/>
</dbReference>
<dbReference type="InterPro" id="IPR033940">
    <property type="entry name" value="IPMI_Swivel"/>
</dbReference>
<dbReference type="InterPro" id="IPR050075">
    <property type="entry name" value="LeuD"/>
</dbReference>
<dbReference type="NCBIfam" id="TIGR00171">
    <property type="entry name" value="leuD"/>
    <property type="match status" value="1"/>
</dbReference>
<dbReference type="NCBIfam" id="NF002458">
    <property type="entry name" value="PRK01641.1"/>
    <property type="match status" value="1"/>
</dbReference>
<dbReference type="PANTHER" id="PTHR43345:SF5">
    <property type="entry name" value="3-ISOPROPYLMALATE DEHYDRATASE SMALL SUBUNIT"/>
    <property type="match status" value="1"/>
</dbReference>
<dbReference type="PANTHER" id="PTHR43345">
    <property type="entry name" value="3-ISOPROPYLMALATE DEHYDRATASE SMALL SUBUNIT 2-RELATED-RELATED"/>
    <property type="match status" value="1"/>
</dbReference>
<dbReference type="Pfam" id="PF00694">
    <property type="entry name" value="Aconitase_C"/>
    <property type="match status" value="1"/>
</dbReference>
<dbReference type="SUPFAM" id="SSF52016">
    <property type="entry name" value="LeuD/IlvD-like"/>
    <property type="match status" value="1"/>
</dbReference>